<reference key="1">
    <citation type="journal article" date="2002" name="Genes Dev.">
        <title>The Arabidopsis HOBBIT gene encodes a CDC27 homolog that links the plant cell cycle to progression of cell differentiation.</title>
        <authorList>
            <person name="Blilou I."/>
            <person name="Frugier F."/>
            <person name="Folmer S."/>
            <person name="Serralbo O."/>
            <person name="Willemsen V."/>
            <person name="Wolkenfelt H."/>
            <person name="Eloy N.B."/>
            <person name="Ferreira P.C."/>
            <person name="Weisbeek P."/>
            <person name="Scheres B."/>
        </authorList>
    </citation>
    <scope>NUCLEOTIDE SEQUENCE [MRNA]</scope>
    <scope>FUNCTION</scope>
</reference>
<reference key="2">
    <citation type="journal article" date="1999" name="Nature">
        <title>Sequence and analysis of chromosome 2 of the plant Arabidopsis thaliana.</title>
        <authorList>
            <person name="Lin X."/>
            <person name="Kaul S."/>
            <person name="Rounsley S.D."/>
            <person name="Shea T.P."/>
            <person name="Benito M.-I."/>
            <person name="Town C.D."/>
            <person name="Fujii C.Y."/>
            <person name="Mason T.M."/>
            <person name="Bowman C.L."/>
            <person name="Barnstead M.E."/>
            <person name="Feldblyum T.V."/>
            <person name="Buell C.R."/>
            <person name="Ketchum K.A."/>
            <person name="Lee J.J."/>
            <person name="Ronning C.M."/>
            <person name="Koo H.L."/>
            <person name="Moffat K.S."/>
            <person name="Cronin L.A."/>
            <person name="Shen M."/>
            <person name="Pai G."/>
            <person name="Van Aken S."/>
            <person name="Umayam L."/>
            <person name="Tallon L.J."/>
            <person name="Gill J.E."/>
            <person name="Adams M.D."/>
            <person name="Carrera A.J."/>
            <person name="Creasy T.H."/>
            <person name="Goodman H.M."/>
            <person name="Somerville C.R."/>
            <person name="Copenhaver G.P."/>
            <person name="Preuss D."/>
            <person name="Nierman W.C."/>
            <person name="White O."/>
            <person name="Eisen J.A."/>
            <person name="Salzberg S.L."/>
            <person name="Fraser C.M."/>
            <person name="Venter J.C."/>
        </authorList>
    </citation>
    <scope>NUCLEOTIDE SEQUENCE [LARGE SCALE GENOMIC DNA]</scope>
    <source>
        <strain>cv. Columbia</strain>
    </source>
</reference>
<reference key="3">
    <citation type="journal article" date="2017" name="Plant J.">
        <title>Araport11: a complete reannotation of the Arabidopsis thaliana reference genome.</title>
        <authorList>
            <person name="Cheng C.Y."/>
            <person name="Krishnakumar V."/>
            <person name="Chan A.P."/>
            <person name="Thibaud-Nissen F."/>
            <person name="Schobel S."/>
            <person name="Town C.D."/>
        </authorList>
    </citation>
    <scope>GENOME REANNOTATION</scope>
    <source>
        <strain>cv. Columbia</strain>
    </source>
</reference>
<reference key="4">
    <citation type="journal article" date="2003" name="Science">
        <title>Empirical analysis of transcriptional activity in the Arabidopsis genome.</title>
        <authorList>
            <person name="Yamada K."/>
            <person name="Lim J."/>
            <person name="Dale J.M."/>
            <person name="Chen H."/>
            <person name="Shinn P."/>
            <person name="Palm C.J."/>
            <person name="Southwick A.M."/>
            <person name="Wu H.C."/>
            <person name="Kim C.J."/>
            <person name="Nguyen M."/>
            <person name="Pham P.K."/>
            <person name="Cheuk R.F."/>
            <person name="Karlin-Newmann G."/>
            <person name="Liu S.X."/>
            <person name="Lam B."/>
            <person name="Sakano H."/>
            <person name="Wu T."/>
            <person name="Yu G."/>
            <person name="Miranda M."/>
            <person name="Quach H.L."/>
            <person name="Tripp M."/>
            <person name="Chang C.H."/>
            <person name="Lee J.M."/>
            <person name="Toriumi M.J."/>
            <person name="Chan M.M."/>
            <person name="Tang C.C."/>
            <person name="Onodera C.S."/>
            <person name="Deng J.M."/>
            <person name="Akiyama K."/>
            <person name="Ansari Y."/>
            <person name="Arakawa T."/>
            <person name="Banh J."/>
            <person name="Banno F."/>
            <person name="Bowser L."/>
            <person name="Brooks S.Y."/>
            <person name="Carninci P."/>
            <person name="Chao Q."/>
            <person name="Choy N."/>
            <person name="Enju A."/>
            <person name="Goldsmith A.D."/>
            <person name="Gurjal M."/>
            <person name="Hansen N.F."/>
            <person name="Hayashizaki Y."/>
            <person name="Johnson-Hopson C."/>
            <person name="Hsuan V.W."/>
            <person name="Iida K."/>
            <person name="Karnes M."/>
            <person name="Khan S."/>
            <person name="Koesema E."/>
            <person name="Ishida J."/>
            <person name="Jiang P.X."/>
            <person name="Jones T."/>
            <person name="Kawai J."/>
            <person name="Kamiya A."/>
            <person name="Meyers C."/>
            <person name="Nakajima M."/>
            <person name="Narusaka M."/>
            <person name="Seki M."/>
            <person name="Sakurai T."/>
            <person name="Satou M."/>
            <person name="Tamse R."/>
            <person name="Vaysberg M."/>
            <person name="Wallender E.K."/>
            <person name="Wong C."/>
            <person name="Yamamura Y."/>
            <person name="Yuan S."/>
            <person name="Shinozaki K."/>
            <person name="Davis R.W."/>
            <person name="Theologis A."/>
            <person name="Ecker J.R."/>
        </authorList>
    </citation>
    <scope>NUCLEOTIDE SEQUENCE [LARGE SCALE MRNA]</scope>
    <source>
        <strain>cv. Columbia</strain>
    </source>
</reference>
<reference key="5">
    <citation type="journal article" date="2008" name="Plant J.">
        <title>Specialization of CDC27 function in the Arabidopsis thaliana anaphase-promoting complex (APC/C).</title>
        <authorList>
            <person name="Perez-Perez J.M."/>
            <person name="Serralbo O."/>
            <person name="Vanstraelen M."/>
            <person name="Gonzalez C."/>
            <person name="Criqui M.C."/>
            <person name="Genschik P."/>
            <person name="Kondorosi E."/>
            <person name="Scheres B."/>
        </authorList>
    </citation>
    <scope>FUNCTION</scope>
    <scope>INTERACTION WITH APC2; APC10; FZR2 AND FZR3</scope>
    <scope>SUBCELLULAR LOCATION</scope>
    <scope>TISSUE SPECIFICITY</scope>
    <scope>DISRUPTION PHENOTYPE</scope>
</reference>
<reference key="6">
    <citation type="journal article" date="2012" name="Proc. Natl. Acad. Sci. U.S.A.">
        <title>SAMBA, a plant-specific anaphase-promoting complex/cyclosome regulator is involved in early development and A-type cyclin stabilization.</title>
        <authorList>
            <person name="Eloy N.B."/>
            <person name="Gonzalez N."/>
            <person name="Van Leene J."/>
            <person name="Maleux K."/>
            <person name="Vanhaeren H."/>
            <person name="De Milde L."/>
            <person name="Dhondt S."/>
            <person name="Vercruysse L."/>
            <person name="Witters E."/>
            <person name="Mercier R."/>
            <person name="Cromer L."/>
            <person name="Beemster G.T."/>
            <person name="Remaut H."/>
            <person name="Van Montagu M.C."/>
            <person name="De Jaeger G."/>
            <person name="Ferreira P.C."/>
            <person name="Inze D."/>
        </authorList>
    </citation>
    <scope>IDENTIFICATION BY MASS SPECTROMETRY</scope>
    <scope>INTERACTION WITH SAMBA</scope>
</reference>
<reference key="7">
    <citation type="journal article" date="2013" name="Curr. Biol.">
        <title>Centromeric cohesion is protected twice at meiosis, by SHUGOSHINs at anaphase I and by PATRONUS at interkinesis.</title>
        <authorList>
            <person name="Cromer L."/>
            <person name="Jolivet S."/>
            <person name="Horlow C."/>
            <person name="Chelysheva L."/>
            <person name="Heyman J."/>
            <person name="De Jaeger G."/>
            <person name="Koncz C."/>
            <person name="De Veylder L."/>
            <person name="Mercier R."/>
        </authorList>
    </citation>
    <scope>INTERACTION WITH PANS1</scope>
</reference>
<dbReference type="EMBL" id="AJ487669">
    <property type="protein sequence ID" value="CAD31951.1"/>
    <property type="molecule type" value="mRNA"/>
</dbReference>
<dbReference type="EMBL" id="AC006081">
    <property type="protein sequence ID" value="AAD24396.1"/>
    <property type="status" value="ALT_SEQ"/>
    <property type="molecule type" value="Genomic_DNA"/>
</dbReference>
<dbReference type="EMBL" id="CP002685">
    <property type="protein sequence ID" value="AEC06953.1"/>
    <property type="molecule type" value="Genomic_DNA"/>
</dbReference>
<dbReference type="EMBL" id="AY062470">
    <property type="protein sequence ID" value="AAL32548.1"/>
    <property type="status" value="ALT_SEQ"/>
    <property type="molecule type" value="mRNA"/>
</dbReference>
<dbReference type="EMBL" id="AY128780">
    <property type="protein sequence ID" value="AAM91180.1"/>
    <property type="status" value="ALT_SEQ"/>
    <property type="molecule type" value="mRNA"/>
</dbReference>
<dbReference type="PIR" id="G84583">
    <property type="entry name" value="G84583"/>
</dbReference>
<dbReference type="RefSeq" id="NP_849994.1">
    <property type="nucleotide sequence ID" value="NM_179663.3"/>
</dbReference>
<dbReference type="SMR" id="Q8LGU6"/>
<dbReference type="BioGRID" id="1874">
    <property type="interactions" value="18"/>
</dbReference>
<dbReference type="ELM" id="Q8LGU6"/>
<dbReference type="FunCoup" id="Q8LGU6">
    <property type="interactions" value="5159"/>
</dbReference>
<dbReference type="IntAct" id="Q8LGU6">
    <property type="interactions" value="21"/>
</dbReference>
<dbReference type="STRING" id="3702.Q8LGU6"/>
<dbReference type="iPTMnet" id="Q8LGU6"/>
<dbReference type="PaxDb" id="3702-AT2G20000.1"/>
<dbReference type="ProteomicsDB" id="223968"/>
<dbReference type="EnsemblPlants" id="AT2G20000.1">
    <property type="protein sequence ID" value="AT2G20000.1"/>
    <property type="gene ID" value="AT2G20000"/>
</dbReference>
<dbReference type="GeneID" id="816519"/>
<dbReference type="Gramene" id="AT2G20000.1">
    <property type="protein sequence ID" value="AT2G20000.1"/>
    <property type="gene ID" value="AT2G20000"/>
</dbReference>
<dbReference type="KEGG" id="ath:AT2G20000"/>
<dbReference type="Araport" id="AT2G20000"/>
<dbReference type="TAIR" id="AT2G20000">
    <property type="gene designation" value="HBT"/>
</dbReference>
<dbReference type="eggNOG" id="KOG1126">
    <property type="taxonomic scope" value="Eukaryota"/>
</dbReference>
<dbReference type="HOGENOM" id="CLU_008850_1_1_1"/>
<dbReference type="InParanoid" id="Q8LGU6"/>
<dbReference type="OMA" id="WHSPQAW"/>
<dbReference type="OrthoDB" id="329563at2759"/>
<dbReference type="PhylomeDB" id="Q8LGU6"/>
<dbReference type="UniPathway" id="UPA00143"/>
<dbReference type="PRO" id="PR:Q8LGU6"/>
<dbReference type="Proteomes" id="UP000006548">
    <property type="component" value="Chromosome 2"/>
</dbReference>
<dbReference type="ExpressionAtlas" id="Q8LGU6">
    <property type="expression patterns" value="baseline and differential"/>
</dbReference>
<dbReference type="GO" id="GO:0005680">
    <property type="term" value="C:anaphase-promoting complex"/>
    <property type="evidence" value="ECO:0000353"/>
    <property type="project" value="TAIR"/>
</dbReference>
<dbReference type="GO" id="GO:0009504">
    <property type="term" value="C:cell plate"/>
    <property type="evidence" value="ECO:0000314"/>
    <property type="project" value="TAIR"/>
</dbReference>
<dbReference type="GO" id="GO:0005634">
    <property type="term" value="C:nucleus"/>
    <property type="evidence" value="ECO:0000314"/>
    <property type="project" value="TAIR"/>
</dbReference>
<dbReference type="GO" id="GO:0005819">
    <property type="term" value="C:spindle"/>
    <property type="evidence" value="ECO:0000314"/>
    <property type="project" value="TAIR"/>
</dbReference>
<dbReference type="GO" id="GO:0030154">
    <property type="term" value="P:cell differentiation"/>
    <property type="evidence" value="ECO:0000315"/>
    <property type="project" value="TAIR"/>
</dbReference>
<dbReference type="GO" id="GO:0051301">
    <property type="term" value="P:cell division"/>
    <property type="evidence" value="ECO:0007669"/>
    <property type="project" value="UniProtKB-KW"/>
</dbReference>
<dbReference type="GO" id="GO:0016567">
    <property type="term" value="P:protein ubiquitination"/>
    <property type="evidence" value="ECO:0007669"/>
    <property type="project" value="UniProtKB-UniPathway"/>
</dbReference>
<dbReference type="GO" id="GO:0007346">
    <property type="term" value="P:regulation of mitotic cell cycle"/>
    <property type="evidence" value="ECO:0000315"/>
    <property type="project" value="TAIR"/>
</dbReference>
<dbReference type="GO" id="GO:0009733">
    <property type="term" value="P:response to auxin"/>
    <property type="evidence" value="ECO:0000315"/>
    <property type="project" value="TAIR"/>
</dbReference>
<dbReference type="GO" id="GO:0048829">
    <property type="term" value="P:root cap development"/>
    <property type="evidence" value="ECO:0000315"/>
    <property type="project" value="TAIR"/>
</dbReference>
<dbReference type="GO" id="GO:0048364">
    <property type="term" value="P:root development"/>
    <property type="evidence" value="ECO:0000315"/>
    <property type="project" value="TAIR"/>
</dbReference>
<dbReference type="GO" id="GO:0010071">
    <property type="term" value="P:root meristem specification"/>
    <property type="evidence" value="ECO:0000315"/>
    <property type="project" value="TAIR"/>
</dbReference>
<dbReference type="FunFam" id="1.25.40.10:FF:000018">
    <property type="entry name" value="Cell division cycle protein 27 homolog B"/>
    <property type="match status" value="1"/>
</dbReference>
<dbReference type="Gene3D" id="1.25.40.10">
    <property type="entry name" value="Tetratricopeptide repeat domain"/>
    <property type="match status" value="4"/>
</dbReference>
<dbReference type="InterPro" id="IPR011990">
    <property type="entry name" value="TPR-like_helical_dom_sf"/>
</dbReference>
<dbReference type="InterPro" id="IPR019734">
    <property type="entry name" value="TPR_rpt"/>
</dbReference>
<dbReference type="PANTHER" id="PTHR12558">
    <property type="entry name" value="CELL DIVISION CYCLE 16,23,27"/>
    <property type="match status" value="1"/>
</dbReference>
<dbReference type="PANTHER" id="PTHR12558:SF13">
    <property type="entry name" value="CELL DIVISION CYCLE PROTEIN 27 HOMOLOG"/>
    <property type="match status" value="1"/>
</dbReference>
<dbReference type="Pfam" id="PF12895">
    <property type="entry name" value="ANAPC3"/>
    <property type="match status" value="1"/>
</dbReference>
<dbReference type="Pfam" id="PF00515">
    <property type="entry name" value="TPR_1"/>
    <property type="match status" value="1"/>
</dbReference>
<dbReference type="Pfam" id="PF13432">
    <property type="entry name" value="TPR_16"/>
    <property type="match status" value="1"/>
</dbReference>
<dbReference type="Pfam" id="PF14559">
    <property type="entry name" value="TPR_19"/>
    <property type="match status" value="1"/>
</dbReference>
<dbReference type="Pfam" id="PF13181">
    <property type="entry name" value="TPR_8"/>
    <property type="match status" value="1"/>
</dbReference>
<dbReference type="SMART" id="SM00028">
    <property type="entry name" value="TPR"/>
    <property type="match status" value="8"/>
</dbReference>
<dbReference type="SUPFAM" id="SSF48452">
    <property type="entry name" value="TPR-like"/>
    <property type="match status" value="2"/>
</dbReference>
<dbReference type="PROSITE" id="PS50005">
    <property type="entry name" value="TPR"/>
    <property type="match status" value="8"/>
</dbReference>
<dbReference type="PROSITE" id="PS50293">
    <property type="entry name" value="TPR_REGION"/>
    <property type="match status" value="2"/>
</dbReference>
<organism>
    <name type="scientific">Arabidopsis thaliana</name>
    <name type="common">Mouse-ear cress</name>
    <dbReference type="NCBI Taxonomy" id="3702"/>
    <lineage>
        <taxon>Eukaryota</taxon>
        <taxon>Viridiplantae</taxon>
        <taxon>Streptophyta</taxon>
        <taxon>Embryophyta</taxon>
        <taxon>Tracheophyta</taxon>
        <taxon>Spermatophyta</taxon>
        <taxon>Magnoliopsida</taxon>
        <taxon>eudicotyledons</taxon>
        <taxon>Gunneridae</taxon>
        <taxon>Pentapetalae</taxon>
        <taxon>rosids</taxon>
        <taxon>malvids</taxon>
        <taxon>Brassicales</taxon>
        <taxon>Brassicaceae</taxon>
        <taxon>Camelineae</taxon>
        <taxon>Arabidopsis</taxon>
    </lineage>
</organism>
<name>CD27B_ARATH</name>
<comment type="function">
    <text evidence="3 4">Component of the anaphase promoting complex/cyclosome (APC/C), a cell cycle-regulated E3 ubiquitin-protein ligase complex that controls progression through mitosis and the G1 phase of the cell cycle. The APC/C complex controls several key steps in the cell cycle by mediating ubiquitination and subsequent degradation of target proteins such as cyclins. The APC/C complex is required for the female gametophyte development and is involved in several aspect of development by controlling cell division and cell elongation. Involved in the control of endoreduplication. Functionally redundant with CDC27A in the control of gametophyte development.</text>
</comment>
<comment type="pathway">
    <text>Protein modification; protein ubiquitination.</text>
</comment>
<comment type="subunit">
    <text evidence="1 4 5 6">The APC/C is composed of at least 10 subunits (By similarity). Can homodimerize (By similarity). Interacts with APC2, APC10, FZR2 and FZR3 (PubMed:17944809). Interacts with PANS1 (PubMed:24206843). Interacts with SAMBA (PubMed:22869741).</text>
</comment>
<comment type="interaction">
    <interactant intactId="EBI-1668733">
        <id>Q8LGU6</id>
    </interactant>
    <interactant intactId="EBI-1749354">
        <id>Q9ZPW2</id>
        <label>APC10</label>
    </interactant>
    <organismsDiffer>false</organismsDiffer>
    <experiments>3</experiments>
</comment>
<comment type="interaction">
    <interactant intactId="EBI-1668733">
        <id>Q8LGU6</id>
    </interactant>
    <interactant intactId="EBI-1749410">
        <id>Q8H1U5</id>
        <label>APC2</label>
    </interactant>
    <organismsDiffer>false</organismsDiffer>
    <experiments>3</experiments>
</comment>
<comment type="interaction">
    <interactant intactId="EBI-1668733">
        <id>Q8LGU6</id>
    </interactant>
    <interactant intactId="EBI-1668707">
        <id>Q9SZA4</id>
        <label>CDC20-1</label>
    </interactant>
    <organismsDiffer>false</organismsDiffer>
    <experiments>2</experiments>
</comment>
<comment type="interaction">
    <interactant intactId="EBI-1668733">
        <id>Q8LGU6</id>
    </interactant>
    <interactant intactId="EBI-1749329">
        <id>Q8VZS9</id>
        <label>FZR1</label>
    </interactant>
    <organismsDiffer>false</organismsDiffer>
    <experiments>2</experiments>
</comment>
<comment type="interaction">
    <interactant intactId="EBI-1668733">
        <id>Q8LGU6</id>
    </interactant>
    <interactant intactId="EBI-1749341">
        <id>Q8LPL5</id>
        <label>FZR3</label>
    </interactant>
    <organismsDiffer>false</organismsDiffer>
    <experiments>2</experiments>
</comment>
<comment type="subcellular location">
    <subcellularLocation>
        <location evidence="4">Nucleus</location>
    </subcellularLocation>
</comment>
<comment type="tissue specificity">
    <text evidence="4">Specifically expressed in dividing and elongating cells.</text>
</comment>
<comment type="disruption phenotype">
    <text evidence="4">Dwarf plant with small leaves and stunted growth. Defect in cell division and expansion. Defective endoreduplication. Cdc27a and cdc27b double mutant is gametophytic lethal (PubMed:17944809).</text>
</comment>
<comment type="similarity">
    <text evidence="7">Belongs to the APC3/CDC27 family.</text>
</comment>
<comment type="sequence caution" evidence="7">
    <conflict type="erroneous gene model prediction">
        <sequence resource="EMBL-CDS" id="AAD24396"/>
    </conflict>
</comment>
<comment type="sequence caution" evidence="7">
    <conflict type="miscellaneous discrepancy">
        <sequence resource="EMBL-CDS" id="AAL32548"/>
    </conflict>
    <text>Intron retention.</text>
</comment>
<comment type="sequence caution" evidence="7">
    <conflict type="miscellaneous discrepancy">
        <sequence resource="EMBL-CDS" id="AAM91180"/>
    </conflict>
    <text>Intron retention.</text>
</comment>
<feature type="chain" id="PRO_0000396840" description="Cell division cycle protein 27 homolog B">
    <location>
        <begin position="1"/>
        <end position="744"/>
    </location>
</feature>
<feature type="repeat" description="TPR 1">
    <location>
        <begin position="101"/>
        <end position="134"/>
    </location>
</feature>
<feature type="repeat" description="TPR 2">
    <location>
        <begin position="450"/>
        <end position="483"/>
    </location>
</feature>
<feature type="repeat" description="TPR 3">
    <location>
        <begin position="518"/>
        <end position="551"/>
    </location>
</feature>
<feature type="repeat" description="TPR 4">
    <location>
        <begin position="553"/>
        <end position="585"/>
    </location>
</feature>
<feature type="repeat" description="TPR 5">
    <location>
        <begin position="587"/>
        <end position="619"/>
    </location>
</feature>
<feature type="repeat" description="TPR 6">
    <location>
        <begin position="621"/>
        <end position="653"/>
    </location>
</feature>
<feature type="repeat" description="TPR 7">
    <location>
        <begin position="655"/>
        <end position="687"/>
    </location>
</feature>
<feature type="repeat" description="TPR 8">
    <location>
        <begin position="688"/>
        <end position="721"/>
    </location>
</feature>
<feature type="region of interest" description="Disordered" evidence="2">
    <location>
        <begin position="180"/>
        <end position="218"/>
    </location>
</feature>
<feature type="region of interest" description="Disordered" evidence="2">
    <location>
        <begin position="359"/>
        <end position="390"/>
    </location>
</feature>
<feature type="compositionally biased region" description="Polar residues" evidence="2">
    <location>
        <begin position="180"/>
        <end position="199"/>
    </location>
</feature>
<feature type="compositionally biased region" description="Basic and acidic residues" evidence="2">
    <location>
        <begin position="363"/>
        <end position="374"/>
    </location>
</feature>
<feature type="compositionally biased region" description="Polar residues" evidence="2">
    <location>
        <begin position="375"/>
        <end position="387"/>
    </location>
</feature>
<protein>
    <recommendedName>
        <fullName>Cell division cycle protein 27 homolog B</fullName>
        <shortName>CDC27 homolog B</shortName>
    </recommendedName>
    <alternativeName>
        <fullName>Protein HOBBIT</fullName>
    </alternativeName>
</protein>
<proteinExistence type="evidence at protein level"/>
<sequence>MEAMLVDCVNNSLRHFVYKNAIFMCERLCAEFPSEVNLQLLATSYLQNNQAYSAYHLLKGTQMAQSRYLFALSCFQMDLLNEAESALCPVNEPGAEIPNGAAGHYLLGLIYKYTDRRKNAAQQFKQSLTIDPLLWAAYEELCILGAAEEATAVFGETAALSIQKQYMQQLSTSLGLNTYNEERNSTSTKNTSSEDYSPRQSKHTQSHGLKDISGNFHSHGVNGGVSNMSFYNTPSPVAAQLSGIAPPPLFRNFQPAVANPNSLITDSSPKSTVNSTLQAPRRKFVDEGKLRKISGRLFSDSGPRRSSRLSADSGANINSSVATVSGNVNNASKYLGGSKLSSLALRSVTLRKGHSWANENMDEGVRGEPFDDSRPNTASTTGSMASNDQEDETMSIGGIAMSSQTITIGVSEILNLLRTLGEGCRLSYMYRCQEALDTYMKLPHKHYNTGWVLSQVGKAYFELIDYLEAEKAFRLARLASPYCLEGMDIYSTVLYHLKEDMKLSYLAQELISTDRLAPQSWCAMGNCYSLQKDHETALKNFLRAVQLNPRFAYAHTLCGHEYTTLEDFENGMKSYQNALRVDTRHYNAWYGLGMIYLRQEKLEFSEHHFRMAFLINPSSSVIMSYLGTSLHALKRSEEALEIMEQAIVADRKNPLPMYQKANILVCLERLDEALEVLEELKEYAPSESSVYALMGRIYKRRNMHDKAMLHFGLALDMKPPATDVAAIKAAMEKLHVPDEIDESP</sequence>
<gene>
    <name type="primary">CDC27B</name>
    <name type="synonym">HBT</name>
    <name type="ordered locus">At2g20000</name>
    <name type="ORF">T2G17.20</name>
</gene>
<keyword id="KW-0131">Cell cycle</keyword>
<keyword id="KW-0132">Cell division</keyword>
<keyword id="KW-0498">Mitosis</keyword>
<keyword id="KW-0539">Nucleus</keyword>
<keyword id="KW-1185">Reference proteome</keyword>
<keyword id="KW-0677">Repeat</keyword>
<keyword id="KW-0802">TPR repeat</keyword>
<keyword id="KW-0833">Ubl conjugation pathway</keyword>
<accession>Q8LGU6</accession>
<accession>Q8W4M8</accession>
<accession>Q9SL81</accession>
<evidence type="ECO:0000250" key="1"/>
<evidence type="ECO:0000256" key="2">
    <source>
        <dbReference type="SAM" id="MobiDB-lite"/>
    </source>
</evidence>
<evidence type="ECO:0000269" key="3">
    <source>
    </source>
</evidence>
<evidence type="ECO:0000269" key="4">
    <source>
    </source>
</evidence>
<evidence type="ECO:0000269" key="5">
    <source>
    </source>
</evidence>
<evidence type="ECO:0000269" key="6">
    <source>
    </source>
</evidence>
<evidence type="ECO:0000305" key="7"/>